<proteinExistence type="inferred from homology"/>
<protein>
    <recommendedName>
        <fullName evidence="1">ATP synthase subunit b</fullName>
    </recommendedName>
    <alternativeName>
        <fullName evidence="1">ATP synthase F(0) sector subunit b</fullName>
    </alternativeName>
    <alternativeName>
        <fullName evidence="1">ATPase subunit I</fullName>
    </alternativeName>
    <alternativeName>
        <fullName evidence="1">F-type ATPase subunit b</fullName>
        <shortName evidence="1">F-ATPase subunit b</shortName>
    </alternativeName>
</protein>
<comment type="function">
    <text evidence="1">F(1)F(0) ATP synthase produces ATP from ADP in the presence of a proton or sodium gradient. F-type ATPases consist of two structural domains, F(1) containing the extramembraneous catalytic core and F(0) containing the membrane proton channel, linked together by a central stalk and a peripheral stalk. During catalysis, ATP synthesis in the catalytic domain of F(1) is coupled via a rotary mechanism of the central stalk subunits to proton translocation.</text>
</comment>
<comment type="function">
    <text evidence="1">Component of the F(0) channel, it forms part of the peripheral stalk, linking F(1) to F(0).</text>
</comment>
<comment type="subunit">
    <text evidence="1">F-type ATPases have 2 components, F(1) - the catalytic core - and F(0) - the membrane proton channel. F(1) has five subunits: alpha(3), beta(3), gamma(1), delta(1), epsilon(1). F(0) has three main subunits: a(1), b(2) and c(10-14). The alpha and beta chains form an alternating ring which encloses part of the gamma chain. F(1) is attached to F(0) by a central stalk formed by the gamma and epsilon chains, while a peripheral stalk is formed by the delta and b chains.</text>
</comment>
<comment type="subcellular location">
    <subcellularLocation>
        <location evidence="1">Cell membrane</location>
        <topology evidence="1">Single-pass membrane protein</topology>
    </subcellularLocation>
</comment>
<comment type="similarity">
    <text evidence="1">Belongs to the ATPase B chain family.</text>
</comment>
<accession>A0QCX4</accession>
<evidence type="ECO:0000255" key="1">
    <source>
        <dbReference type="HAMAP-Rule" id="MF_01398"/>
    </source>
</evidence>
<feature type="chain" id="PRO_0000368594" description="ATP synthase subunit b">
    <location>
        <begin position="1"/>
        <end position="178"/>
    </location>
</feature>
<feature type="transmembrane region" description="Helical" evidence="1">
    <location>
        <begin position="30"/>
        <end position="50"/>
    </location>
</feature>
<gene>
    <name evidence="1" type="primary">atpF</name>
    <name type="ordered locus">MAV_1523</name>
</gene>
<name>ATPF_MYCA1</name>
<sequence length="178" mass="18942">MMGDASLSVLASSQVVAEGGNNFLVPNGTFFFVLAIFLIVLAVIGTFVVPPVMKVLRERDAMVAKTAADNRKAAEQFEAAQADYEEAMTEARVQASSLRDNARAEGRKVVEDARAKAEQEVLSTLQLAARQLKRERDAVELDLRANVASMSATLASRILGVDVAPAAATTSATKTSGR</sequence>
<keyword id="KW-0066">ATP synthesis</keyword>
<keyword id="KW-1003">Cell membrane</keyword>
<keyword id="KW-0138">CF(0)</keyword>
<keyword id="KW-0375">Hydrogen ion transport</keyword>
<keyword id="KW-0406">Ion transport</keyword>
<keyword id="KW-0472">Membrane</keyword>
<keyword id="KW-0812">Transmembrane</keyword>
<keyword id="KW-1133">Transmembrane helix</keyword>
<keyword id="KW-0813">Transport</keyword>
<organism>
    <name type="scientific">Mycobacterium avium (strain 104)</name>
    <dbReference type="NCBI Taxonomy" id="243243"/>
    <lineage>
        <taxon>Bacteria</taxon>
        <taxon>Bacillati</taxon>
        <taxon>Actinomycetota</taxon>
        <taxon>Actinomycetes</taxon>
        <taxon>Mycobacteriales</taxon>
        <taxon>Mycobacteriaceae</taxon>
        <taxon>Mycobacterium</taxon>
        <taxon>Mycobacterium avium complex (MAC)</taxon>
    </lineage>
</organism>
<reference key="1">
    <citation type="submission" date="2006-10" db="EMBL/GenBank/DDBJ databases">
        <authorList>
            <person name="Fleischmann R.D."/>
            <person name="Dodson R.J."/>
            <person name="Haft D.H."/>
            <person name="Merkel J.S."/>
            <person name="Nelson W.C."/>
            <person name="Fraser C.M."/>
        </authorList>
    </citation>
    <scope>NUCLEOTIDE SEQUENCE [LARGE SCALE GENOMIC DNA]</scope>
    <source>
        <strain>104</strain>
    </source>
</reference>
<dbReference type="EMBL" id="CP000479">
    <property type="protein sequence ID" value="ABK68791.1"/>
    <property type="molecule type" value="Genomic_DNA"/>
</dbReference>
<dbReference type="SMR" id="A0QCX4"/>
<dbReference type="KEGG" id="mav:MAV_1523"/>
<dbReference type="HOGENOM" id="CLU_079215_5_2_11"/>
<dbReference type="Proteomes" id="UP000001574">
    <property type="component" value="Chromosome"/>
</dbReference>
<dbReference type="GO" id="GO:0005886">
    <property type="term" value="C:plasma membrane"/>
    <property type="evidence" value="ECO:0007669"/>
    <property type="project" value="UniProtKB-SubCell"/>
</dbReference>
<dbReference type="GO" id="GO:0045259">
    <property type="term" value="C:proton-transporting ATP synthase complex"/>
    <property type="evidence" value="ECO:0007669"/>
    <property type="project" value="UniProtKB-KW"/>
</dbReference>
<dbReference type="GO" id="GO:0046933">
    <property type="term" value="F:proton-transporting ATP synthase activity, rotational mechanism"/>
    <property type="evidence" value="ECO:0007669"/>
    <property type="project" value="UniProtKB-UniRule"/>
</dbReference>
<dbReference type="GO" id="GO:0046961">
    <property type="term" value="F:proton-transporting ATPase activity, rotational mechanism"/>
    <property type="evidence" value="ECO:0007669"/>
    <property type="project" value="TreeGrafter"/>
</dbReference>
<dbReference type="CDD" id="cd06503">
    <property type="entry name" value="ATP-synt_Fo_b"/>
    <property type="match status" value="1"/>
</dbReference>
<dbReference type="HAMAP" id="MF_01398">
    <property type="entry name" value="ATP_synth_b_bprime"/>
    <property type="match status" value="1"/>
</dbReference>
<dbReference type="InterPro" id="IPR028987">
    <property type="entry name" value="ATP_synth_B-like_membr_sf"/>
</dbReference>
<dbReference type="InterPro" id="IPR002146">
    <property type="entry name" value="ATP_synth_b/b'su_bac/chlpt"/>
</dbReference>
<dbReference type="InterPro" id="IPR050059">
    <property type="entry name" value="ATP_synthase_B_chain"/>
</dbReference>
<dbReference type="NCBIfam" id="NF004412">
    <property type="entry name" value="PRK05759.1-3"/>
    <property type="match status" value="1"/>
</dbReference>
<dbReference type="PANTHER" id="PTHR33445:SF1">
    <property type="entry name" value="ATP SYNTHASE SUBUNIT B"/>
    <property type="match status" value="1"/>
</dbReference>
<dbReference type="PANTHER" id="PTHR33445">
    <property type="entry name" value="ATP SYNTHASE SUBUNIT B', CHLOROPLASTIC"/>
    <property type="match status" value="1"/>
</dbReference>
<dbReference type="Pfam" id="PF00430">
    <property type="entry name" value="ATP-synt_B"/>
    <property type="match status" value="1"/>
</dbReference>
<dbReference type="SUPFAM" id="SSF81573">
    <property type="entry name" value="F1F0 ATP synthase subunit B, membrane domain"/>
    <property type="match status" value="1"/>
</dbReference>